<reference key="1">
    <citation type="submission" date="2006-12" db="EMBL/GenBank/DDBJ databases">
        <title>Complete sequence of chromosome 1 of Nocardioides sp. JS614.</title>
        <authorList>
            <person name="Copeland A."/>
            <person name="Lucas S."/>
            <person name="Lapidus A."/>
            <person name="Barry K."/>
            <person name="Detter J.C."/>
            <person name="Glavina del Rio T."/>
            <person name="Hammon N."/>
            <person name="Israni S."/>
            <person name="Dalin E."/>
            <person name="Tice H."/>
            <person name="Pitluck S."/>
            <person name="Thompson L.S."/>
            <person name="Brettin T."/>
            <person name="Bruce D."/>
            <person name="Han C."/>
            <person name="Tapia R."/>
            <person name="Schmutz J."/>
            <person name="Larimer F."/>
            <person name="Land M."/>
            <person name="Hauser L."/>
            <person name="Kyrpides N."/>
            <person name="Kim E."/>
            <person name="Mattes T."/>
            <person name="Gossett J."/>
            <person name="Richardson P."/>
        </authorList>
    </citation>
    <scope>NUCLEOTIDE SEQUENCE [LARGE SCALE GENOMIC DNA]</scope>
    <source>
        <strain>ATCC BAA-499 / JS614</strain>
    </source>
</reference>
<accession>A1SNJ9</accession>
<name>RL15_NOCSJ</name>
<organism>
    <name type="scientific">Nocardioides sp. (strain ATCC BAA-499 / JS614)</name>
    <dbReference type="NCBI Taxonomy" id="196162"/>
    <lineage>
        <taxon>Bacteria</taxon>
        <taxon>Bacillati</taxon>
        <taxon>Actinomycetota</taxon>
        <taxon>Actinomycetes</taxon>
        <taxon>Propionibacteriales</taxon>
        <taxon>Nocardioidaceae</taxon>
        <taxon>Nocardioides</taxon>
    </lineage>
</organism>
<protein>
    <recommendedName>
        <fullName evidence="1">Large ribosomal subunit protein uL15</fullName>
    </recommendedName>
    <alternativeName>
        <fullName evidence="3">50S ribosomal protein L15</fullName>
    </alternativeName>
</protein>
<evidence type="ECO:0000255" key="1">
    <source>
        <dbReference type="HAMAP-Rule" id="MF_01341"/>
    </source>
</evidence>
<evidence type="ECO:0000256" key="2">
    <source>
        <dbReference type="SAM" id="MobiDB-lite"/>
    </source>
</evidence>
<evidence type="ECO:0000305" key="3"/>
<feature type="chain" id="PRO_1000086720" description="Large ribosomal subunit protein uL15">
    <location>
        <begin position="1"/>
        <end position="146"/>
    </location>
</feature>
<feature type="region of interest" description="Disordered" evidence="2">
    <location>
        <begin position="1"/>
        <end position="39"/>
    </location>
</feature>
<keyword id="KW-1185">Reference proteome</keyword>
<keyword id="KW-0687">Ribonucleoprotein</keyword>
<keyword id="KW-0689">Ribosomal protein</keyword>
<keyword id="KW-0694">RNA-binding</keyword>
<keyword id="KW-0699">rRNA-binding</keyword>
<sequence>MTLKLHNLRPAPGAKTAKTRVGRGEGSKGKTAGRGTKGTKARYQVPAAFEGGQMPIHMRLPKLKGFKNPFKVEFQVVNLDRINQLFPEGGAVGVEDLVAKGAVRDGHPVKVLGQGEISVAVQVSANAFSATASEKIEAAGGTTTLV</sequence>
<gene>
    <name evidence="1" type="primary">rplO</name>
    <name type="ordered locus">Noca_3886</name>
</gene>
<comment type="function">
    <text evidence="1">Binds to the 23S rRNA.</text>
</comment>
<comment type="subunit">
    <text evidence="1">Part of the 50S ribosomal subunit.</text>
</comment>
<comment type="similarity">
    <text evidence="1">Belongs to the universal ribosomal protein uL15 family.</text>
</comment>
<dbReference type="EMBL" id="CP000509">
    <property type="protein sequence ID" value="ABL83384.1"/>
    <property type="molecule type" value="Genomic_DNA"/>
</dbReference>
<dbReference type="RefSeq" id="WP_011757315.1">
    <property type="nucleotide sequence ID" value="NC_008699.1"/>
</dbReference>
<dbReference type="SMR" id="A1SNJ9"/>
<dbReference type="STRING" id="196162.Noca_3886"/>
<dbReference type="KEGG" id="nca:Noca_3886"/>
<dbReference type="eggNOG" id="COG0200">
    <property type="taxonomic scope" value="Bacteria"/>
</dbReference>
<dbReference type="HOGENOM" id="CLU_055188_4_1_11"/>
<dbReference type="OrthoDB" id="9810293at2"/>
<dbReference type="Proteomes" id="UP000000640">
    <property type="component" value="Chromosome"/>
</dbReference>
<dbReference type="GO" id="GO:0022625">
    <property type="term" value="C:cytosolic large ribosomal subunit"/>
    <property type="evidence" value="ECO:0007669"/>
    <property type="project" value="TreeGrafter"/>
</dbReference>
<dbReference type="GO" id="GO:0019843">
    <property type="term" value="F:rRNA binding"/>
    <property type="evidence" value="ECO:0007669"/>
    <property type="project" value="UniProtKB-UniRule"/>
</dbReference>
<dbReference type="GO" id="GO:0003735">
    <property type="term" value="F:structural constituent of ribosome"/>
    <property type="evidence" value="ECO:0007669"/>
    <property type="project" value="InterPro"/>
</dbReference>
<dbReference type="GO" id="GO:0006412">
    <property type="term" value="P:translation"/>
    <property type="evidence" value="ECO:0007669"/>
    <property type="project" value="UniProtKB-UniRule"/>
</dbReference>
<dbReference type="FunFam" id="3.100.10.10:FF:000005">
    <property type="entry name" value="50S ribosomal protein L15"/>
    <property type="match status" value="1"/>
</dbReference>
<dbReference type="Gene3D" id="3.100.10.10">
    <property type="match status" value="1"/>
</dbReference>
<dbReference type="HAMAP" id="MF_01341">
    <property type="entry name" value="Ribosomal_uL15"/>
    <property type="match status" value="1"/>
</dbReference>
<dbReference type="InterPro" id="IPR030878">
    <property type="entry name" value="Ribosomal_uL15"/>
</dbReference>
<dbReference type="InterPro" id="IPR021131">
    <property type="entry name" value="Ribosomal_uL15/eL18"/>
</dbReference>
<dbReference type="InterPro" id="IPR036227">
    <property type="entry name" value="Ribosomal_uL15/eL18_sf"/>
</dbReference>
<dbReference type="InterPro" id="IPR005749">
    <property type="entry name" value="Ribosomal_uL15_bac-type"/>
</dbReference>
<dbReference type="InterPro" id="IPR001196">
    <property type="entry name" value="Ribosomal_uL15_CS"/>
</dbReference>
<dbReference type="NCBIfam" id="TIGR01071">
    <property type="entry name" value="rplO_bact"/>
    <property type="match status" value="1"/>
</dbReference>
<dbReference type="PANTHER" id="PTHR12934">
    <property type="entry name" value="50S RIBOSOMAL PROTEIN L15"/>
    <property type="match status" value="1"/>
</dbReference>
<dbReference type="PANTHER" id="PTHR12934:SF11">
    <property type="entry name" value="LARGE RIBOSOMAL SUBUNIT PROTEIN UL15M"/>
    <property type="match status" value="1"/>
</dbReference>
<dbReference type="Pfam" id="PF00828">
    <property type="entry name" value="Ribosomal_L27A"/>
    <property type="match status" value="1"/>
</dbReference>
<dbReference type="SUPFAM" id="SSF52080">
    <property type="entry name" value="Ribosomal proteins L15p and L18e"/>
    <property type="match status" value="1"/>
</dbReference>
<dbReference type="PROSITE" id="PS00475">
    <property type="entry name" value="RIBOSOMAL_L15"/>
    <property type="match status" value="1"/>
</dbReference>
<proteinExistence type="inferred from homology"/>